<organism>
    <name type="scientific">Gossypium hirsutum</name>
    <name type="common">Upland cotton</name>
    <name type="synonym">Gossypium mexicanum</name>
    <dbReference type="NCBI Taxonomy" id="3635"/>
    <lineage>
        <taxon>Eukaryota</taxon>
        <taxon>Viridiplantae</taxon>
        <taxon>Streptophyta</taxon>
        <taxon>Embryophyta</taxon>
        <taxon>Tracheophyta</taxon>
        <taxon>Spermatophyta</taxon>
        <taxon>Magnoliopsida</taxon>
        <taxon>eudicotyledons</taxon>
        <taxon>Gunneridae</taxon>
        <taxon>Pentapetalae</taxon>
        <taxon>rosids</taxon>
        <taxon>malvids</taxon>
        <taxon>Malvales</taxon>
        <taxon>Malvaceae</taxon>
        <taxon>Malvoideae</taxon>
        <taxon>Gossypium</taxon>
    </lineage>
</organism>
<comment type="function">
    <text evidence="1">Catalyzes the formation of the isocyclic ring in chlorophyll biosynthesis. Mediates the cyclase reaction, which results in the formation of divinylprotochlorophyllide (Pchlide) characteristic of all chlorophylls from magnesium-protoporphyrin IX 13-monomethyl ester (MgPMME) (By similarity).</text>
</comment>
<comment type="catalytic activity">
    <reaction>
        <text>Mg-protoporphyrin IX 13-monomethyl ester + 3 NADPH + 3 O2 + 2 H(+) = 3,8-divinyl protochlorophyllide a + 3 NADP(+) + 5 H2O</text>
        <dbReference type="Rhea" id="RHEA:33235"/>
        <dbReference type="ChEBI" id="CHEBI:15377"/>
        <dbReference type="ChEBI" id="CHEBI:15378"/>
        <dbReference type="ChEBI" id="CHEBI:15379"/>
        <dbReference type="ChEBI" id="CHEBI:57783"/>
        <dbReference type="ChEBI" id="CHEBI:58349"/>
        <dbReference type="ChEBI" id="CHEBI:58632"/>
        <dbReference type="ChEBI" id="CHEBI:60491"/>
        <dbReference type="EC" id="1.14.13.81"/>
    </reaction>
</comment>
<comment type="cofactor">
    <cofactor evidence="1">
        <name>Fe cation</name>
        <dbReference type="ChEBI" id="CHEBI:24875"/>
    </cofactor>
</comment>
<comment type="pathway">
    <text>Porphyrin-containing compound metabolism; chlorophyll biosynthesis.</text>
</comment>
<comment type="subcellular location">
    <subcellularLocation>
        <location evidence="1">Plastid</location>
        <location evidence="1">Chloroplast</location>
    </subcellularLocation>
</comment>
<comment type="similarity">
    <text evidence="3">Belongs to the AcsF family.</text>
</comment>
<comment type="sequence caution" evidence="3">
    <conflict type="erroneous initiation">
        <sequence resource="EMBL-CDS" id="AAR20445"/>
    </conflict>
</comment>
<sequence>MATEMALVKPISKFSTSSPIFSNSRYGKFTTVRMSSTSQSTTKAAAKGGKKAAKTAIKETLLTPRFYTTDFDEMEALFNTEINKNLNQSEFESLLQEFKTDYNQTHFVRNKEFKEAADKIDGPLRQIFVEFSERSCTAEFSGFLLYKELGRRLKKTNPVVAEIFSLMSRDEARHAGFLNKGLSDFNLALDLGFLTKARKYTFFKPKFIFYATYLSEKIGYWRYITIYRHLKENPEYQCYPIFKYFENWCQDENRHGDFFSALLKAQPQFLNDWKAKLWSRFFCLSVYVTMYLNDCQRTAFYEGIGLDTKEFDMHVIIETNRTTARIFPAVLDVENPEFKRRLDKMVEINEQLLAVGETSDIPLVKNLKRIPLIAALASELLATYLMPPIESGSVDFAEFEPQLVY</sequence>
<dbReference type="EC" id="1.14.13.81"/>
<dbReference type="EMBL" id="AY456957">
    <property type="protein sequence ID" value="AAR20445.2"/>
    <property type="status" value="ALT_INIT"/>
    <property type="molecule type" value="mRNA"/>
</dbReference>
<dbReference type="STRING" id="3635.Q6SJV8"/>
<dbReference type="PaxDb" id="3635-Q6SJV8"/>
<dbReference type="UniPathway" id="UPA00668"/>
<dbReference type="Proteomes" id="UP000189702">
    <property type="component" value="Unplaced"/>
</dbReference>
<dbReference type="GO" id="GO:0009535">
    <property type="term" value="C:chloroplast thylakoid membrane"/>
    <property type="evidence" value="ECO:0000318"/>
    <property type="project" value="GO_Central"/>
</dbReference>
<dbReference type="GO" id="GO:0048529">
    <property type="term" value="F:magnesium-protoporphyrin IX monomethyl ester (oxidative) cyclase activity"/>
    <property type="evidence" value="ECO:0000318"/>
    <property type="project" value="GO_Central"/>
</dbReference>
<dbReference type="GO" id="GO:0046872">
    <property type="term" value="F:metal ion binding"/>
    <property type="evidence" value="ECO:0007669"/>
    <property type="project" value="UniProtKB-KW"/>
</dbReference>
<dbReference type="GO" id="GO:0015995">
    <property type="term" value="P:chlorophyll biosynthetic process"/>
    <property type="evidence" value="ECO:0000318"/>
    <property type="project" value="GO_Central"/>
</dbReference>
<dbReference type="GO" id="GO:0015979">
    <property type="term" value="P:photosynthesis"/>
    <property type="evidence" value="ECO:0007669"/>
    <property type="project" value="UniProtKB-KW"/>
</dbReference>
<dbReference type="CDD" id="cd01047">
    <property type="entry name" value="ACSF"/>
    <property type="match status" value="1"/>
</dbReference>
<dbReference type="HAMAP" id="MF_01840">
    <property type="entry name" value="AcsF"/>
    <property type="match status" value="1"/>
</dbReference>
<dbReference type="InterPro" id="IPR008434">
    <property type="entry name" value="AcsF"/>
</dbReference>
<dbReference type="InterPro" id="IPR009078">
    <property type="entry name" value="Ferritin-like_SF"/>
</dbReference>
<dbReference type="InterPro" id="IPR003251">
    <property type="entry name" value="Rr_diiron-bd_dom"/>
</dbReference>
<dbReference type="NCBIfam" id="TIGR02029">
    <property type="entry name" value="AcsF"/>
    <property type="match status" value="1"/>
</dbReference>
<dbReference type="NCBIfam" id="NF010172">
    <property type="entry name" value="PRK13654.1"/>
    <property type="match status" value="1"/>
</dbReference>
<dbReference type="PANTHER" id="PTHR31053">
    <property type="entry name" value="MAGNESIUM-PROTOPORPHYRIN IX MONOMETHYL ESTER [OXIDATIVE] CYCLASE, CHLOROPLASTIC"/>
    <property type="match status" value="1"/>
</dbReference>
<dbReference type="PANTHER" id="PTHR31053:SF2">
    <property type="entry name" value="MAGNESIUM-PROTOPORPHYRIN IX MONOMETHYL ESTER [OXIDATIVE] CYCLASE, CHLOROPLASTIC"/>
    <property type="match status" value="1"/>
</dbReference>
<dbReference type="Pfam" id="PF02915">
    <property type="entry name" value="Rubrerythrin"/>
    <property type="match status" value="1"/>
</dbReference>
<dbReference type="SUPFAM" id="SSF47240">
    <property type="entry name" value="Ferritin-like"/>
    <property type="match status" value="1"/>
</dbReference>
<accession>Q6SJV8</accession>
<keyword id="KW-0149">Chlorophyll biosynthesis</keyword>
<keyword id="KW-0150">Chloroplast</keyword>
<keyword id="KW-0408">Iron</keyword>
<keyword id="KW-0479">Metal-binding</keyword>
<keyword id="KW-0521">NADP</keyword>
<keyword id="KW-0560">Oxidoreductase</keyword>
<keyword id="KW-0602">Photosynthesis</keyword>
<keyword id="KW-0934">Plastid</keyword>
<keyword id="KW-1185">Reference proteome</keyword>
<keyword id="KW-0809">Transit peptide</keyword>
<reference key="1">
    <citation type="submission" date="2003-11" db="EMBL/GenBank/DDBJ databases">
        <title>Cloning and characterization of GhZIP.</title>
        <authorList>
            <person name="Hua X."/>
            <person name="Liu N."/>
            <person name="Liu H."/>
            <person name="Yang Y."/>
            <person name="Shan D."/>
            <person name="Zhang Y."/>
            <person name="Guo Y."/>
            <person name="Zhang M."/>
            <person name="Wu C."/>
            <person name="Li X."/>
            <person name="Zheng C."/>
        </authorList>
    </citation>
    <scope>NUCLEOTIDE SEQUENCE [MRNA]</scope>
</reference>
<protein>
    <recommendedName>
        <fullName>Magnesium-protoporphyrin IX monomethyl ester [oxidative] cyclase, chloroplastic</fullName>
        <shortName>Mg-protoporphyrin IX monomethyl ester oxidative cyclase</shortName>
        <ecNumber>1.14.13.81</ecNumber>
    </recommendedName>
</protein>
<evidence type="ECO:0000250" key="1"/>
<evidence type="ECO:0000255" key="2"/>
<evidence type="ECO:0000305" key="3"/>
<proteinExistence type="evidence at transcript level"/>
<feature type="transit peptide" description="Chloroplast" evidence="2">
    <location>
        <begin position="1"/>
        <end position="43"/>
    </location>
</feature>
<feature type="chain" id="PRO_0000000602" description="Magnesium-protoporphyrin IX monomethyl ester [oxidative] cyclase, chloroplastic">
    <location>
        <begin position="44"/>
        <end position="405"/>
    </location>
</feature>
<gene>
    <name type="primary">CRD1</name>
    <name type="synonym">ZIP</name>
</gene>
<name>CRD1_GOSHI</name>